<dbReference type="EC" id="2.7.7.6" evidence="1"/>
<dbReference type="EMBL" id="AP009373">
    <property type="protein sequence ID" value="BAF50364.1"/>
    <property type="molecule type" value="Genomic_DNA"/>
</dbReference>
<dbReference type="RefSeq" id="YP_001123540.1">
    <property type="nucleotide sequence ID" value="NC_009272.1"/>
</dbReference>
<dbReference type="SMR" id="A4QL09"/>
<dbReference type="GeneID" id="4964709"/>
<dbReference type="GO" id="GO:0009507">
    <property type="term" value="C:chloroplast"/>
    <property type="evidence" value="ECO:0007669"/>
    <property type="project" value="UniProtKB-SubCell"/>
</dbReference>
<dbReference type="GO" id="GO:0000428">
    <property type="term" value="C:DNA-directed RNA polymerase complex"/>
    <property type="evidence" value="ECO:0007669"/>
    <property type="project" value="UniProtKB-KW"/>
</dbReference>
<dbReference type="GO" id="GO:0005739">
    <property type="term" value="C:mitochondrion"/>
    <property type="evidence" value="ECO:0007669"/>
    <property type="project" value="GOC"/>
</dbReference>
<dbReference type="GO" id="GO:0003677">
    <property type="term" value="F:DNA binding"/>
    <property type="evidence" value="ECO:0007669"/>
    <property type="project" value="UniProtKB-UniRule"/>
</dbReference>
<dbReference type="GO" id="GO:0003899">
    <property type="term" value="F:DNA-directed RNA polymerase activity"/>
    <property type="evidence" value="ECO:0007669"/>
    <property type="project" value="UniProtKB-UniRule"/>
</dbReference>
<dbReference type="GO" id="GO:0008270">
    <property type="term" value="F:zinc ion binding"/>
    <property type="evidence" value="ECO:0007669"/>
    <property type="project" value="UniProtKB-UniRule"/>
</dbReference>
<dbReference type="GO" id="GO:0006351">
    <property type="term" value="P:DNA-templated transcription"/>
    <property type="evidence" value="ECO:0007669"/>
    <property type="project" value="UniProtKB-UniRule"/>
</dbReference>
<dbReference type="CDD" id="cd02655">
    <property type="entry name" value="RNAP_beta'_C"/>
    <property type="match status" value="1"/>
</dbReference>
<dbReference type="FunFam" id="1.10.132.30:FF:000002">
    <property type="entry name" value="DNA-directed RNA polymerase subunit beta"/>
    <property type="match status" value="1"/>
</dbReference>
<dbReference type="FunFam" id="1.10.1790.20:FF:000002">
    <property type="entry name" value="DNA-directed RNA polymerase subunit beta"/>
    <property type="match status" value="1"/>
</dbReference>
<dbReference type="FunFam" id="1.10.274.100:FF:000011">
    <property type="entry name" value="DNA-directed RNA polymerase subunit beta"/>
    <property type="match status" value="1"/>
</dbReference>
<dbReference type="Gene3D" id="1.10.132.30">
    <property type="match status" value="1"/>
</dbReference>
<dbReference type="Gene3D" id="1.10.150.390">
    <property type="match status" value="1"/>
</dbReference>
<dbReference type="Gene3D" id="1.10.1790.20">
    <property type="match status" value="1"/>
</dbReference>
<dbReference type="Gene3D" id="1.10.274.100">
    <property type="entry name" value="RNA polymerase Rpb1, domain 3"/>
    <property type="match status" value="1"/>
</dbReference>
<dbReference type="HAMAP" id="MF_01324">
    <property type="entry name" value="RNApol_bact_RpoC2"/>
    <property type="match status" value="1"/>
</dbReference>
<dbReference type="InterPro" id="IPR012756">
    <property type="entry name" value="DNA-dir_RpoC2_beta_pp"/>
</dbReference>
<dbReference type="InterPro" id="IPR050254">
    <property type="entry name" value="RNA_pol_beta''_euk"/>
</dbReference>
<dbReference type="InterPro" id="IPR042102">
    <property type="entry name" value="RNA_pol_Rpb1_3_sf"/>
</dbReference>
<dbReference type="InterPro" id="IPR007083">
    <property type="entry name" value="RNA_pol_Rpb1_4"/>
</dbReference>
<dbReference type="InterPro" id="IPR007081">
    <property type="entry name" value="RNA_pol_Rpb1_5"/>
</dbReference>
<dbReference type="InterPro" id="IPR038120">
    <property type="entry name" value="Rpb1_funnel_sf"/>
</dbReference>
<dbReference type="NCBIfam" id="TIGR02388">
    <property type="entry name" value="rpoC2_cyan"/>
    <property type="match status" value="1"/>
</dbReference>
<dbReference type="PANTHER" id="PTHR34995">
    <property type="entry name" value="DNA-DIRECTED RNA POLYMERASE SUBUNIT BETA"/>
    <property type="match status" value="1"/>
</dbReference>
<dbReference type="PANTHER" id="PTHR34995:SF1">
    <property type="entry name" value="DNA-DIRECTED RNA POLYMERASE SUBUNIT BETA"/>
    <property type="match status" value="1"/>
</dbReference>
<dbReference type="Pfam" id="PF05000">
    <property type="entry name" value="RNA_pol_Rpb1_4"/>
    <property type="match status" value="1"/>
</dbReference>
<dbReference type="Pfam" id="PF04998">
    <property type="entry name" value="RNA_pol_Rpb1_5"/>
    <property type="match status" value="2"/>
</dbReference>
<dbReference type="SUPFAM" id="SSF64484">
    <property type="entry name" value="beta and beta-prime subunits of DNA dependent RNA-polymerase"/>
    <property type="match status" value="1"/>
</dbReference>
<proteinExistence type="inferred from homology"/>
<protein>
    <recommendedName>
        <fullName evidence="1">DNA-directed RNA polymerase subunit beta''</fullName>
        <ecNumber evidence="1">2.7.7.6</ecNumber>
    </recommendedName>
    <alternativeName>
        <fullName evidence="1">PEP</fullName>
    </alternativeName>
    <alternativeName>
        <fullName evidence="1">Plastid-encoded RNA polymerase subunit beta''</fullName>
        <shortName evidence="1">RNA polymerase subunit beta''</shortName>
    </alternativeName>
</protein>
<organism>
    <name type="scientific">Draba nemorosa</name>
    <name type="common">Woodland whitlowgrass</name>
    <dbReference type="NCBI Taxonomy" id="171822"/>
    <lineage>
        <taxon>Eukaryota</taxon>
        <taxon>Viridiplantae</taxon>
        <taxon>Streptophyta</taxon>
        <taxon>Embryophyta</taxon>
        <taxon>Tracheophyta</taxon>
        <taxon>Spermatophyta</taxon>
        <taxon>Magnoliopsida</taxon>
        <taxon>eudicotyledons</taxon>
        <taxon>Gunneridae</taxon>
        <taxon>Pentapetalae</taxon>
        <taxon>rosids</taxon>
        <taxon>malvids</taxon>
        <taxon>Brassicales</taxon>
        <taxon>Brassicaceae</taxon>
        <taxon>Arabideae</taxon>
        <taxon>Draba</taxon>
    </lineage>
</organism>
<name>RPOC2_DRANE</name>
<sequence>MAERANLVFHNKVIDGTAIKRLISRLIDHFGMAYTSHILDQVKTLGFQQATATSISLGIDDLLTIPSKGWLVQDAEQQSLILEKHHHYGNVHAVEKLRQSIEIWYATSEYLRQEMNPNFRMTDPFNPVHMMSFSGARGNASQVHQLVGMRGLMSDPQGQMIDLPIQSNLREGLSLTEYIISCYGARKGVVDTAVRTSDAGYLTRRLVEVVQHIVVRRTDCGTIRGISVSPRNKNRMMSERIFIQTLIGRVLADDIYIGSRCVAFRNQDLGIGLVNRFITFGTQSISIRTPFTCRSTSWICRLCYGRSPTHGDLVELGEAVGIIAGQSIGEPGTQLTLRTFHTGGVFTGGTAEHVRAPYNGKIKFNEDLVHPTRTRHGHPAFLCYIDLSVIIESDDIIHNVTIPPKSFLLVQNDQYVESEQVIAEIREGASTFHFKERVRKYIYSGSEGEMHWSTDVSHAPEFTYSNVHLLPKTSHLWILSGGSCGSSLIRFSIHKDQDQMNIPFLSAQIKSISSLSVNNDQVSQKFCSSDFYDKKKSGITDYSELNGIVGTSHYNFIYSTIFHENSDLLAKRRRNRFLIPFQSIQEQEKEFIRHSGISIEIPINGIFRRNSIFAFFDDPRYRRKSSGILKYGTLRADSIIQKEDMIEYRGGQKFKTKYEMKVDRFFFIPEEVHILPESSVIMVQNYSIIGVNTRITLNIRSQVGGLIRVERKKKRIELKIFSGDIHFPDKTDKISRHSGILIPPGRGKTNPKESKKLKNWIYVQRITPTKKKFFVLVRPVGTYEIANSINLATLFPQDLFREKDNIELRVFNYILYGNGKPTRGISDTSIQLVRTCLVLNWDQDTKNSSLEEVRAFFIEVSTKGLIRDFIRIGLVKSHISYIRKRNNPPDSGLISADHINPFYSISPKAFILQQSLRQNHGTVRMFLNSNKESPSLLILSSSNCFRIGLFNHVKYHNVINQSIKKNPLITIKNSSGPLGTAIQISNCYSFLPLLTYNKISAIKYLQLDKVKYSFQVINSYLIDENGRSFNLDRYSNGVLNPLKLNWYFLHQNYYHNYCEETSTIISLGQFFCENLCIAKKEPHLKSGQVLIVQKDSIVIRSAKPYLATPGAKVHGHYREILYEGDTLVTFIYEKSRSGDITQGLPKVEQVLEVRSIDSISLNLEKRIKGWNKCITRILGIPWGFLIGAELTIVQSRISLVNKIQKVYRSQGVQIHNRHIEIIVRQITSKVLVSEEGMSNVFLPGELIGLLRAERTGRALEEAICYRAILLGITRASLNTQSFISEASFQETARVLAKAALRGRIDWLKGLKENVVLGGMIPAGTGFNKGLVHCSRQHTNTLLEKRTKNLSLFEGDMKDILFYHREFFDSSISISKSSFSRI</sequence>
<geneLocation type="chloroplast"/>
<comment type="function">
    <text evidence="1">DNA-dependent RNA polymerase catalyzes the transcription of DNA into RNA using the four ribonucleoside triphosphates as substrates.</text>
</comment>
<comment type="catalytic activity">
    <reaction evidence="1">
        <text>RNA(n) + a ribonucleoside 5'-triphosphate = RNA(n+1) + diphosphate</text>
        <dbReference type="Rhea" id="RHEA:21248"/>
        <dbReference type="Rhea" id="RHEA-COMP:14527"/>
        <dbReference type="Rhea" id="RHEA-COMP:17342"/>
        <dbReference type="ChEBI" id="CHEBI:33019"/>
        <dbReference type="ChEBI" id="CHEBI:61557"/>
        <dbReference type="ChEBI" id="CHEBI:140395"/>
        <dbReference type="EC" id="2.7.7.6"/>
    </reaction>
</comment>
<comment type="cofactor">
    <cofactor evidence="1">
        <name>Zn(2+)</name>
        <dbReference type="ChEBI" id="CHEBI:29105"/>
    </cofactor>
    <text evidence="1">Binds 1 Zn(2+) ion per subunit.</text>
</comment>
<comment type="subunit">
    <text evidence="1">In plastids the minimal PEP RNA polymerase catalytic core is composed of four subunits: alpha, beta, beta', and beta''. When a (nuclear-encoded) sigma factor is associated with the core the holoenzyme is formed, which can initiate transcription.</text>
</comment>
<comment type="subcellular location">
    <subcellularLocation>
        <location evidence="1">Plastid</location>
        <location evidence="1">Chloroplast</location>
    </subcellularLocation>
</comment>
<comment type="similarity">
    <text evidence="1">Belongs to the RNA polymerase beta' chain family. RpoC2 subfamily.</text>
</comment>
<accession>A4QL09</accession>
<reference key="1">
    <citation type="submission" date="2007-03" db="EMBL/GenBank/DDBJ databases">
        <title>Sequencing analysis of Draba nemoroza chloroplast DNA.</title>
        <authorList>
            <person name="Hosouchi T."/>
            <person name="Tsuruoka H."/>
            <person name="Kotani H."/>
        </authorList>
    </citation>
    <scope>NUCLEOTIDE SEQUENCE [LARGE SCALE GENOMIC DNA]</scope>
</reference>
<evidence type="ECO:0000255" key="1">
    <source>
        <dbReference type="HAMAP-Rule" id="MF_01324"/>
    </source>
</evidence>
<gene>
    <name evidence="1" type="primary">rpoC2</name>
</gene>
<keyword id="KW-0150">Chloroplast</keyword>
<keyword id="KW-0240">DNA-directed RNA polymerase</keyword>
<keyword id="KW-0479">Metal-binding</keyword>
<keyword id="KW-0548">Nucleotidyltransferase</keyword>
<keyword id="KW-0934">Plastid</keyword>
<keyword id="KW-0804">Transcription</keyword>
<keyword id="KW-0808">Transferase</keyword>
<keyword id="KW-0862">Zinc</keyword>
<feature type="chain" id="PRO_0000353560" description="DNA-directed RNA polymerase subunit beta''">
    <location>
        <begin position="1"/>
        <end position="1381"/>
    </location>
</feature>
<feature type="binding site" evidence="1">
    <location>
        <position position="220"/>
    </location>
    <ligand>
        <name>Zn(2+)</name>
        <dbReference type="ChEBI" id="CHEBI:29105"/>
    </ligand>
</feature>
<feature type="binding site" evidence="1">
    <location>
        <position position="293"/>
    </location>
    <ligand>
        <name>Zn(2+)</name>
        <dbReference type="ChEBI" id="CHEBI:29105"/>
    </ligand>
</feature>
<feature type="binding site" evidence="1">
    <location>
        <position position="300"/>
    </location>
    <ligand>
        <name>Zn(2+)</name>
        <dbReference type="ChEBI" id="CHEBI:29105"/>
    </ligand>
</feature>
<feature type="binding site" evidence="1">
    <location>
        <position position="303"/>
    </location>
    <ligand>
        <name>Zn(2+)</name>
        <dbReference type="ChEBI" id="CHEBI:29105"/>
    </ligand>
</feature>